<name>ISDF_STAAE</name>
<feature type="chain" id="PRO_0000372463" description="Probable heme-iron transport system permease protein IsdF">
    <location>
        <begin position="1"/>
        <end position="322"/>
    </location>
</feature>
<feature type="transmembrane region" description="Helical" evidence="1">
    <location>
        <begin position="9"/>
        <end position="29"/>
    </location>
</feature>
<feature type="transmembrane region" description="Helical" evidence="1">
    <location>
        <begin position="61"/>
        <end position="81"/>
    </location>
</feature>
<feature type="transmembrane region" description="Helical" evidence="1">
    <location>
        <begin position="89"/>
        <end position="109"/>
    </location>
</feature>
<feature type="transmembrane region" description="Helical" evidence="1">
    <location>
        <begin position="114"/>
        <end position="134"/>
    </location>
</feature>
<feature type="transmembrane region" description="Helical" evidence="1">
    <location>
        <begin position="143"/>
        <end position="163"/>
    </location>
</feature>
<feature type="transmembrane region" description="Helical" evidence="1">
    <location>
        <begin position="179"/>
        <end position="199"/>
    </location>
</feature>
<feature type="transmembrane region" description="Helical" evidence="1">
    <location>
        <begin position="233"/>
        <end position="253"/>
    </location>
</feature>
<feature type="transmembrane region" description="Helical" evidence="1">
    <location>
        <begin position="267"/>
        <end position="287"/>
    </location>
</feature>
<feature type="transmembrane region" description="Helical" evidence="1">
    <location>
        <begin position="294"/>
        <end position="314"/>
    </location>
</feature>
<gene>
    <name type="primary">isdF</name>
    <name type="synonym">sirG</name>
    <name type="ordered locus">NWMN_1045</name>
</gene>
<protein>
    <recommendedName>
        <fullName>Probable heme-iron transport system permease protein IsdF</fullName>
    </recommendedName>
    <alternativeName>
        <fullName>Iron-regulated surface determinant protein F</fullName>
    </alternativeName>
    <alternativeName>
        <fullName>Staphylococcal iron-regulated protein G</fullName>
    </alternativeName>
</protein>
<dbReference type="EMBL" id="AP009351">
    <property type="protein sequence ID" value="BAF67317.1"/>
    <property type="molecule type" value="Genomic_DNA"/>
</dbReference>
<dbReference type="SMR" id="A6QG35"/>
<dbReference type="KEGG" id="sae:NWMN_1045"/>
<dbReference type="HOGENOM" id="CLU_013016_1_1_9"/>
<dbReference type="Proteomes" id="UP000006386">
    <property type="component" value="Chromosome"/>
</dbReference>
<dbReference type="GO" id="GO:0005886">
    <property type="term" value="C:plasma membrane"/>
    <property type="evidence" value="ECO:0007669"/>
    <property type="project" value="UniProtKB-SubCell"/>
</dbReference>
<dbReference type="GO" id="GO:0022857">
    <property type="term" value="F:transmembrane transporter activity"/>
    <property type="evidence" value="ECO:0007669"/>
    <property type="project" value="InterPro"/>
</dbReference>
<dbReference type="GO" id="GO:0033214">
    <property type="term" value="P:siderophore-dependent iron import into cell"/>
    <property type="evidence" value="ECO:0007669"/>
    <property type="project" value="TreeGrafter"/>
</dbReference>
<dbReference type="CDD" id="cd06550">
    <property type="entry name" value="TM_ABC_iron-siderophores_like"/>
    <property type="match status" value="1"/>
</dbReference>
<dbReference type="FunFam" id="1.10.3470.10:FF:000001">
    <property type="entry name" value="Vitamin B12 ABC transporter permease BtuC"/>
    <property type="match status" value="1"/>
</dbReference>
<dbReference type="Gene3D" id="1.10.3470.10">
    <property type="entry name" value="ABC transporter involved in vitamin B12 uptake, BtuC"/>
    <property type="match status" value="1"/>
</dbReference>
<dbReference type="InterPro" id="IPR037294">
    <property type="entry name" value="ABC_BtuC-like"/>
</dbReference>
<dbReference type="InterPro" id="IPR000522">
    <property type="entry name" value="ABC_transptr_permease_BtuC"/>
</dbReference>
<dbReference type="PANTHER" id="PTHR30472">
    <property type="entry name" value="FERRIC ENTEROBACTIN TRANSPORT SYSTEM PERMEASE PROTEIN"/>
    <property type="match status" value="1"/>
</dbReference>
<dbReference type="PANTHER" id="PTHR30472:SF21">
    <property type="entry name" value="HEME-IRON TRANSPORT SYSTEM PERMEASE PROTEIN ISDF-RELATED"/>
    <property type="match status" value="1"/>
</dbReference>
<dbReference type="Pfam" id="PF01032">
    <property type="entry name" value="FecCD"/>
    <property type="match status" value="1"/>
</dbReference>
<dbReference type="SUPFAM" id="SSF81345">
    <property type="entry name" value="ABC transporter involved in vitamin B12 uptake, BtuC"/>
    <property type="match status" value="1"/>
</dbReference>
<reference key="1">
    <citation type="journal article" date="2008" name="J. Bacteriol.">
        <title>Genome sequence of Staphylococcus aureus strain Newman and comparative analysis of staphylococcal genomes: polymorphism and evolution of two major pathogenicity islands.</title>
        <authorList>
            <person name="Baba T."/>
            <person name="Bae T."/>
            <person name="Schneewind O."/>
            <person name="Takeuchi F."/>
            <person name="Hiramatsu K."/>
        </authorList>
    </citation>
    <scope>NUCLEOTIDE SEQUENCE [LARGE SCALE GENOMIC DNA]</scope>
    <source>
        <strain>Newman</strain>
    </source>
</reference>
<reference key="2">
    <citation type="journal article" date="2003" name="Science">
        <title>Passage of heme-iron across the envelope of Staphylococcus aureus.</title>
        <authorList>
            <person name="Mazmanian S.K."/>
            <person name="Skaar E.P."/>
            <person name="Gaspar A.H."/>
            <person name="Humayun M."/>
            <person name="Gornicki P."/>
            <person name="Jelenska J."/>
            <person name="Joachmiak A."/>
            <person name="Missiakas D.M."/>
            <person name="Schneewind O."/>
        </authorList>
    </citation>
    <scope>IRON-REGULATED EXPRESSION</scope>
</reference>
<proteinExistence type="evidence at transcript level"/>
<evidence type="ECO:0000255" key="1"/>
<evidence type="ECO:0000305" key="2"/>
<accession>A6QG35</accession>
<sequence length="322" mass="35175">MMIKNKKKLLFLCLLVILIATAYISFVTGTIKLSFNDLFTKFTTGSNEAVDSIIDLRLPRILIALMVGAMLAVSGALLQAALQNPLAEANIIGVSSGALIMRALCMLFIPQLYFYLPLLSFIGGLIPFLIIILLHSKFRFNAVSMILVGVALFVLLNGVLEILTQNPLMKIPQGLTMKIWSDVYILAVSALLGLILTLLLSPKLNLLNLDDIQARSIGFNIDRYRWLTGLLAVFLASATVAIVGQLAFLGIIVPHVVRKLVGGNYRVLIPFSTVIGAWLLLVADLLGRVIQPPLEIPANAILMIVGGPMLIYLICQSQRNRI</sequence>
<comment type="function">
    <text evidence="2">Part of the binding-protein-dependent transport system for heme-iron. Responsible for the translocation of the substrate across the membrane (Probable).</text>
</comment>
<comment type="subcellular location">
    <subcellularLocation>
        <location evidence="2">Cell membrane</location>
        <topology evidence="2">Multi-pass membrane protein</topology>
    </subcellularLocation>
</comment>
<comment type="induction">
    <text>Repressed by fur in the presence of iron.</text>
</comment>
<comment type="similarity">
    <text evidence="2">Belongs to the binding-protein-dependent transport system permease family. FecCD subfamily.</text>
</comment>
<keyword id="KW-1003">Cell membrane</keyword>
<keyword id="KW-0408">Iron</keyword>
<keyword id="KW-0472">Membrane</keyword>
<keyword id="KW-0812">Transmembrane</keyword>
<keyword id="KW-1133">Transmembrane helix</keyword>
<keyword id="KW-0813">Transport</keyword>
<organism>
    <name type="scientific">Staphylococcus aureus (strain Newman)</name>
    <dbReference type="NCBI Taxonomy" id="426430"/>
    <lineage>
        <taxon>Bacteria</taxon>
        <taxon>Bacillati</taxon>
        <taxon>Bacillota</taxon>
        <taxon>Bacilli</taxon>
        <taxon>Bacillales</taxon>
        <taxon>Staphylococcaceae</taxon>
        <taxon>Staphylococcus</taxon>
    </lineage>
</organism>